<proteinExistence type="evidence at protein level"/>
<protein>
    <recommendedName>
        <fullName>Mitogen-activated protein kinase 6</fullName>
        <shortName>MAP kinase 6</shortName>
        <shortName>MAPK 6</shortName>
        <ecNumber>2.7.11.24</ecNumber>
    </recommendedName>
    <alternativeName>
        <fullName>Extracellular signal-regulated kinase 3</fullName>
        <shortName>ERK-3</shortName>
    </alternativeName>
    <alternativeName>
        <fullName>MAP kinase isoform p97</fullName>
        <shortName>p97-MAPK</shortName>
    </alternativeName>
</protein>
<keyword id="KW-0002">3D-structure</keyword>
<keyword id="KW-0067">ATP-binding</keyword>
<keyword id="KW-0131">Cell cycle</keyword>
<keyword id="KW-0963">Cytoplasm</keyword>
<keyword id="KW-0418">Kinase</keyword>
<keyword id="KW-0547">Nucleotide-binding</keyword>
<keyword id="KW-0539">Nucleus</keyword>
<keyword id="KW-0597">Phosphoprotein</keyword>
<keyword id="KW-1267">Proteomics identification</keyword>
<keyword id="KW-1185">Reference proteome</keyword>
<keyword id="KW-0723">Serine/threonine-protein kinase</keyword>
<keyword id="KW-0808">Transferase</keyword>
<keyword id="KW-0832">Ubl conjugation</keyword>
<gene>
    <name type="primary">MAPK6</name>
    <name type="synonym">ERK3</name>
    <name type="synonym">PRKM6</name>
</gene>
<accession>Q16659</accession>
<accession>B2R945</accession>
<accession>B5BU65</accession>
<accession>Q68DH4</accession>
<accession>Q8IYN8</accession>
<reference key="1">
    <citation type="journal article" date="1994" name="Mol. Cell. Biol.">
        <title>Cloning and characterization of p97MAPK, a novel human homolog of rat ERK-3.</title>
        <authorList>
            <person name="Zhu A.X."/>
            <person name="Zhao Y."/>
            <person name="Moller D.E."/>
            <person name="Flier J.S."/>
        </authorList>
    </citation>
    <scope>NUCLEOTIDE SEQUENCE [MRNA]</scope>
    <source>
        <tissue>Fetal skeletal muscle</tissue>
    </source>
</reference>
<reference key="2">
    <citation type="journal article" date="1996" name="Oncogene">
        <title>Primary structure, expression and chromosomal locus of a human homolog of rat ERK3.</title>
        <authorList>
            <person name="Meloche S."/>
            <person name="Beatty B.G."/>
            <person name="Pellerin J."/>
        </authorList>
    </citation>
    <scope>NUCLEOTIDE SEQUENCE [MRNA]</scope>
    <source>
        <tissue>Smooth muscle</tissue>
    </source>
</reference>
<reference key="3">
    <citation type="submission" date="2001-09" db="EMBL/GenBank/DDBJ databases">
        <title>ERK-3 cDNA clone isolated from human oral cancer.</title>
        <authorList>
            <person name="Saranath D."/>
            <person name="Mahale A."/>
            <person name="Rai R."/>
            <person name="Dedhia P."/>
        </authorList>
    </citation>
    <scope>NUCLEOTIDE SEQUENCE [MRNA]</scope>
    <source>
        <tissue>Oral cancer</tissue>
    </source>
</reference>
<reference key="4">
    <citation type="journal article" date="2004" name="Nat. Genet.">
        <title>Complete sequencing and characterization of 21,243 full-length human cDNAs.</title>
        <authorList>
            <person name="Ota T."/>
            <person name="Suzuki Y."/>
            <person name="Nishikawa T."/>
            <person name="Otsuki T."/>
            <person name="Sugiyama T."/>
            <person name="Irie R."/>
            <person name="Wakamatsu A."/>
            <person name="Hayashi K."/>
            <person name="Sato H."/>
            <person name="Nagai K."/>
            <person name="Kimura K."/>
            <person name="Makita H."/>
            <person name="Sekine M."/>
            <person name="Obayashi M."/>
            <person name="Nishi T."/>
            <person name="Shibahara T."/>
            <person name="Tanaka T."/>
            <person name="Ishii S."/>
            <person name="Yamamoto J."/>
            <person name="Saito K."/>
            <person name="Kawai Y."/>
            <person name="Isono Y."/>
            <person name="Nakamura Y."/>
            <person name="Nagahari K."/>
            <person name="Murakami K."/>
            <person name="Yasuda T."/>
            <person name="Iwayanagi T."/>
            <person name="Wagatsuma M."/>
            <person name="Shiratori A."/>
            <person name="Sudo H."/>
            <person name="Hosoiri T."/>
            <person name="Kaku Y."/>
            <person name="Kodaira H."/>
            <person name="Kondo H."/>
            <person name="Sugawara M."/>
            <person name="Takahashi M."/>
            <person name="Kanda K."/>
            <person name="Yokoi T."/>
            <person name="Furuya T."/>
            <person name="Kikkawa E."/>
            <person name="Omura Y."/>
            <person name="Abe K."/>
            <person name="Kamihara K."/>
            <person name="Katsuta N."/>
            <person name="Sato K."/>
            <person name="Tanikawa M."/>
            <person name="Yamazaki M."/>
            <person name="Ninomiya K."/>
            <person name="Ishibashi T."/>
            <person name="Yamashita H."/>
            <person name="Murakawa K."/>
            <person name="Fujimori K."/>
            <person name="Tanai H."/>
            <person name="Kimata M."/>
            <person name="Watanabe M."/>
            <person name="Hiraoka S."/>
            <person name="Chiba Y."/>
            <person name="Ishida S."/>
            <person name="Ono Y."/>
            <person name="Takiguchi S."/>
            <person name="Watanabe S."/>
            <person name="Yosida M."/>
            <person name="Hotuta T."/>
            <person name="Kusano J."/>
            <person name="Kanehori K."/>
            <person name="Takahashi-Fujii A."/>
            <person name="Hara H."/>
            <person name="Tanase T.-O."/>
            <person name="Nomura Y."/>
            <person name="Togiya S."/>
            <person name="Komai F."/>
            <person name="Hara R."/>
            <person name="Takeuchi K."/>
            <person name="Arita M."/>
            <person name="Imose N."/>
            <person name="Musashino K."/>
            <person name="Yuuki H."/>
            <person name="Oshima A."/>
            <person name="Sasaki N."/>
            <person name="Aotsuka S."/>
            <person name="Yoshikawa Y."/>
            <person name="Matsunawa H."/>
            <person name="Ichihara T."/>
            <person name="Shiohata N."/>
            <person name="Sano S."/>
            <person name="Moriya S."/>
            <person name="Momiyama H."/>
            <person name="Satoh N."/>
            <person name="Takami S."/>
            <person name="Terashima Y."/>
            <person name="Suzuki O."/>
            <person name="Nakagawa S."/>
            <person name="Senoh A."/>
            <person name="Mizoguchi H."/>
            <person name="Goto Y."/>
            <person name="Shimizu F."/>
            <person name="Wakebe H."/>
            <person name="Hishigaki H."/>
            <person name="Watanabe T."/>
            <person name="Sugiyama A."/>
            <person name="Takemoto M."/>
            <person name="Kawakami B."/>
            <person name="Yamazaki M."/>
            <person name="Watanabe K."/>
            <person name="Kumagai A."/>
            <person name="Itakura S."/>
            <person name="Fukuzumi Y."/>
            <person name="Fujimori Y."/>
            <person name="Komiyama M."/>
            <person name="Tashiro H."/>
            <person name="Tanigami A."/>
            <person name="Fujiwara T."/>
            <person name="Ono T."/>
            <person name="Yamada K."/>
            <person name="Fujii Y."/>
            <person name="Ozaki K."/>
            <person name="Hirao M."/>
            <person name="Ohmori Y."/>
            <person name="Kawabata A."/>
            <person name="Hikiji T."/>
            <person name="Kobatake N."/>
            <person name="Inagaki H."/>
            <person name="Ikema Y."/>
            <person name="Okamoto S."/>
            <person name="Okitani R."/>
            <person name="Kawakami T."/>
            <person name="Noguchi S."/>
            <person name="Itoh T."/>
            <person name="Shigeta K."/>
            <person name="Senba T."/>
            <person name="Matsumura K."/>
            <person name="Nakajima Y."/>
            <person name="Mizuno T."/>
            <person name="Morinaga M."/>
            <person name="Sasaki M."/>
            <person name="Togashi T."/>
            <person name="Oyama M."/>
            <person name="Hata H."/>
            <person name="Watanabe M."/>
            <person name="Komatsu T."/>
            <person name="Mizushima-Sugano J."/>
            <person name="Satoh T."/>
            <person name="Shirai Y."/>
            <person name="Takahashi Y."/>
            <person name="Nakagawa K."/>
            <person name="Okumura K."/>
            <person name="Nagase T."/>
            <person name="Nomura N."/>
            <person name="Kikuchi H."/>
            <person name="Masuho Y."/>
            <person name="Yamashita R."/>
            <person name="Nakai K."/>
            <person name="Yada T."/>
            <person name="Nakamura Y."/>
            <person name="Ohara O."/>
            <person name="Isogai T."/>
            <person name="Sugano S."/>
        </authorList>
    </citation>
    <scope>NUCLEOTIDE SEQUENCE [LARGE SCALE MRNA]</scope>
    <source>
        <tissue>Trachea</tissue>
    </source>
</reference>
<reference key="5">
    <citation type="journal article" date="2007" name="BMC Genomics">
        <title>The full-ORF clone resource of the German cDNA consortium.</title>
        <authorList>
            <person name="Bechtel S."/>
            <person name="Rosenfelder H."/>
            <person name="Duda A."/>
            <person name="Schmidt C.P."/>
            <person name="Ernst U."/>
            <person name="Wellenreuther R."/>
            <person name="Mehrle A."/>
            <person name="Schuster C."/>
            <person name="Bahr A."/>
            <person name="Bloecker H."/>
            <person name="Heubner D."/>
            <person name="Hoerlein A."/>
            <person name="Michel G."/>
            <person name="Wedler H."/>
            <person name="Koehrer K."/>
            <person name="Ottenwaelder B."/>
            <person name="Poustka A."/>
            <person name="Wiemann S."/>
            <person name="Schupp I."/>
        </authorList>
    </citation>
    <scope>NUCLEOTIDE SEQUENCE [LARGE SCALE MRNA]</scope>
    <source>
        <tissue>Esophageal carcinoma</tissue>
    </source>
</reference>
<reference key="6">
    <citation type="journal article" date="2008" name="Nat. Methods">
        <title>Human protein factory for converting the transcriptome into an in vitro-expressed proteome.</title>
        <authorList>
            <person name="Goshima N."/>
            <person name="Kawamura Y."/>
            <person name="Fukumoto A."/>
            <person name="Miura A."/>
            <person name="Honma R."/>
            <person name="Satoh R."/>
            <person name="Wakamatsu A."/>
            <person name="Yamamoto J."/>
            <person name="Kimura K."/>
            <person name="Nishikawa T."/>
            <person name="Andoh T."/>
            <person name="Iida Y."/>
            <person name="Ishikawa K."/>
            <person name="Ito E."/>
            <person name="Kagawa N."/>
            <person name="Kaminaga C."/>
            <person name="Kanehori K."/>
            <person name="Kawakami B."/>
            <person name="Kenmochi K."/>
            <person name="Kimura R."/>
            <person name="Kobayashi M."/>
            <person name="Kuroita T."/>
            <person name="Kuwayama H."/>
            <person name="Maruyama Y."/>
            <person name="Matsuo K."/>
            <person name="Minami K."/>
            <person name="Mitsubori M."/>
            <person name="Mori M."/>
            <person name="Morishita R."/>
            <person name="Murase A."/>
            <person name="Nishikawa A."/>
            <person name="Nishikawa S."/>
            <person name="Okamoto T."/>
            <person name="Sakagami N."/>
            <person name="Sakamoto Y."/>
            <person name="Sasaki Y."/>
            <person name="Seki T."/>
            <person name="Sono S."/>
            <person name="Sugiyama A."/>
            <person name="Sumiya T."/>
            <person name="Takayama T."/>
            <person name="Takayama Y."/>
            <person name="Takeda H."/>
            <person name="Togashi T."/>
            <person name="Yahata K."/>
            <person name="Yamada H."/>
            <person name="Yanagisawa Y."/>
            <person name="Endo Y."/>
            <person name="Imamoto F."/>
            <person name="Kisu Y."/>
            <person name="Tanaka S."/>
            <person name="Isogai T."/>
            <person name="Imai J."/>
            <person name="Watanabe S."/>
            <person name="Nomura N."/>
        </authorList>
    </citation>
    <scope>NUCLEOTIDE SEQUENCE [LARGE SCALE MRNA]</scope>
</reference>
<reference key="7">
    <citation type="journal article" date="2004" name="Genome Res.">
        <title>The status, quality, and expansion of the NIH full-length cDNA project: the Mammalian Gene Collection (MGC).</title>
        <authorList>
            <consortium name="The MGC Project Team"/>
        </authorList>
    </citation>
    <scope>NUCLEOTIDE SEQUENCE [LARGE SCALE MRNA]</scope>
    <scope>VARIANT VAL-290</scope>
    <source>
        <tissue>Placenta</tissue>
    </source>
</reference>
<reference key="8">
    <citation type="journal article" date="2004" name="Mol. Cell. Biol.">
        <title>N-Terminal ubiquitination of extracellular signal-regulated kinase 3 and p21 directs their degradation by the proteasome.</title>
        <authorList>
            <person name="Coulombe P."/>
            <person name="Rodier G."/>
            <person name="Bonneil E."/>
            <person name="Thibault P."/>
            <person name="Meloche S."/>
        </authorList>
    </citation>
    <scope>UBIQUITINATION AT MET-1</scope>
</reference>
<reference key="9">
    <citation type="journal article" date="2008" name="Proc. Natl. Acad. Sci. U.S.A.">
        <title>A quantitative atlas of mitotic phosphorylation.</title>
        <authorList>
            <person name="Dephoure N."/>
            <person name="Zhou C."/>
            <person name="Villen J."/>
            <person name="Beausoleil S.A."/>
            <person name="Bakalarski C.E."/>
            <person name="Elledge S.J."/>
            <person name="Gygi S.P."/>
        </authorList>
    </citation>
    <scope>PHOSPHORYLATION [LARGE SCALE ANALYSIS] AT SER-189</scope>
    <scope>IDENTIFICATION BY MASS SPECTROMETRY [LARGE SCALE ANALYSIS]</scope>
    <source>
        <tissue>Cervix carcinoma</tissue>
    </source>
</reference>
<reference key="10">
    <citation type="journal article" date="2009" name="Mol. Cell. Proteomics">
        <title>Large-scale proteomics analysis of the human kinome.</title>
        <authorList>
            <person name="Oppermann F.S."/>
            <person name="Gnad F."/>
            <person name="Olsen J.V."/>
            <person name="Hornberger R."/>
            <person name="Greff Z."/>
            <person name="Keri G."/>
            <person name="Mann M."/>
            <person name="Daub H."/>
        </authorList>
    </citation>
    <scope>PHOSPHORYLATION [LARGE SCALE ANALYSIS] AT SER-189</scope>
    <scope>IDENTIFICATION BY MASS SPECTROMETRY [LARGE SCALE ANALYSIS]</scope>
</reference>
<reference key="11">
    <citation type="journal article" date="2009" name="Sci. Signal.">
        <title>Quantitative phosphoproteomic analysis of T cell receptor signaling reveals system-wide modulation of protein-protein interactions.</title>
        <authorList>
            <person name="Mayya V."/>
            <person name="Lundgren D.H."/>
            <person name="Hwang S.-I."/>
            <person name="Rezaul K."/>
            <person name="Wu L."/>
            <person name="Eng J.K."/>
            <person name="Rodionov V."/>
            <person name="Han D.K."/>
        </authorList>
    </citation>
    <scope>IDENTIFICATION BY MASS SPECTROMETRY [LARGE SCALE ANALYSIS]</scope>
    <source>
        <tissue>Leukemic T-cell</tissue>
    </source>
</reference>
<reference key="12">
    <citation type="journal article" date="2011" name="J. Biol. Chem.">
        <title>Activation loop phosphorylation of ERK3/ERK4 by group I p21-activated kinases (PAKs) defines a novel PAK-ERK3/4-MAPK-activated protein kinase 5 signaling pathway.</title>
        <authorList>
            <person name="Deleris P."/>
            <person name="Trost M."/>
            <person name="Topisirovic I."/>
            <person name="Tanguay P.L."/>
            <person name="Borden K.L."/>
            <person name="Thibault P."/>
            <person name="Meloche S."/>
        </authorList>
    </citation>
    <scope>PHOSPHORYLATION AT SER-189</scope>
</reference>
<reference key="13">
    <citation type="journal article" date="2012" name="Mol. Cell. Biol.">
        <title>Identification and proteomic analysis of distinct UBE3A/E6AP protein complexes.</title>
        <authorList>
            <person name="Martinez-Noel G."/>
            <person name="Galligan J.T."/>
            <person name="Sowa M.E."/>
            <person name="Arndt V."/>
            <person name="Overton T.M."/>
            <person name="Harper J.W."/>
            <person name="Howley P.M."/>
        </authorList>
    </citation>
    <scope>INTERACTION WITH UBE3A AND NEURL4</scope>
</reference>
<reference key="14">
    <citation type="journal article" date="2013" name="J. Proteome Res.">
        <title>Toward a comprehensive characterization of a human cancer cell phosphoproteome.</title>
        <authorList>
            <person name="Zhou H."/>
            <person name="Di Palma S."/>
            <person name="Preisinger C."/>
            <person name="Peng M."/>
            <person name="Polat A.N."/>
            <person name="Heck A.J."/>
            <person name="Mohammed S."/>
        </authorList>
    </citation>
    <scope>PHOSPHORYLATION [LARGE SCALE ANALYSIS] AT SER-189; SER-386; SER-452; SER-556; SER-558; SER-665 AND SER-684</scope>
    <scope>IDENTIFICATION BY MASS SPECTROMETRY [LARGE SCALE ANALYSIS]</scope>
    <source>
        <tissue>Cervix carcinoma</tissue>
        <tissue>Erythroleukemia</tissue>
    </source>
</reference>
<reference key="15">
    <citation type="journal article" date="2007" name="Nature">
        <title>Patterns of somatic mutation in human cancer genomes.</title>
        <authorList>
            <person name="Greenman C."/>
            <person name="Stephens P."/>
            <person name="Smith R."/>
            <person name="Dalgliesh G.L."/>
            <person name="Hunter C."/>
            <person name="Bignell G."/>
            <person name="Davies H."/>
            <person name="Teague J."/>
            <person name="Butler A."/>
            <person name="Stevens C."/>
            <person name="Edkins S."/>
            <person name="O'Meara S."/>
            <person name="Vastrik I."/>
            <person name="Schmidt E.E."/>
            <person name="Avis T."/>
            <person name="Barthorpe S."/>
            <person name="Bhamra G."/>
            <person name="Buck G."/>
            <person name="Choudhury B."/>
            <person name="Clements J."/>
            <person name="Cole J."/>
            <person name="Dicks E."/>
            <person name="Forbes S."/>
            <person name="Gray K."/>
            <person name="Halliday K."/>
            <person name="Harrison R."/>
            <person name="Hills K."/>
            <person name="Hinton J."/>
            <person name="Jenkinson A."/>
            <person name="Jones D."/>
            <person name="Menzies A."/>
            <person name="Mironenko T."/>
            <person name="Perry J."/>
            <person name="Raine K."/>
            <person name="Richardson D."/>
            <person name="Shepherd R."/>
            <person name="Small A."/>
            <person name="Tofts C."/>
            <person name="Varian J."/>
            <person name="Webb T."/>
            <person name="West S."/>
            <person name="Widaa S."/>
            <person name="Yates A."/>
            <person name="Cahill D.P."/>
            <person name="Louis D.N."/>
            <person name="Goldstraw P."/>
            <person name="Nicholson A.G."/>
            <person name="Brasseur F."/>
            <person name="Looijenga L."/>
            <person name="Weber B.L."/>
            <person name="Chiew Y.-E."/>
            <person name="DeFazio A."/>
            <person name="Greaves M.F."/>
            <person name="Green A.R."/>
            <person name="Campbell P."/>
            <person name="Birney E."/>
            <person name="Easton D.F."/>
            <person name="Chenevix-Trench G."/>
            <person name="Tan M.-H."/>
            <person name="Khoo S.K."/>
            <person name="Teh B.T."/>
            <person name="Yuen S.T."/>
            <person name="Leung S.Y."/>
            <person name="Wooster R."/>
            <person name="Futreal P.A."/>
            <person name="Stratton M.R."/>
        </authorList>
    </citation>
    <scope>VARIANT [LARGE SCALE ANALYSIS] VAL-290</scope>
</reference>
<sequence>MAEKFESLMNIHGFDLGSRYMDLKPLGCGGNGLVFSAVDNDCDKRVAIKKIVLTDPQSVKHALREIKIIRRLDHDNIVKVFEILGPSGSQLTDDVGSLTELNSVYIVQEYMETDLANVLEQGPLLEEHARLFMYQLLRGLKYIHSANVLHRDLKPANLFINTEDLVLKIGDFGLARIMDPHYSHKGHLSEGLVTKWYRSPRLLLSPNNYTKAIDMWAAGCIFAEMLTGKTLFAGAHELEQMQLILESIPVVHEEDRQELLSVIPVYIRNDMTEPHKPLTQLLPGISREALDFLEQILTFSPMDRLTAEEALSHPYMSIYSFPMDEPISSHPFHIEDEVDDILLMDETHSHIYNWERYHDCQFSEHDWPVHNNFDIDEVQLDPRALSDVTDEEEVQVDPRKYLDGDREKYLEDPAFDTNYSTEPCWQYSDHHENKYCDLECSHTCNYKTRSSSYLDNLVWRESEVNHYYEPKLIIDLSNWKEQSKEKSDKKGKSKCERNGLVKAQIALEEASQQLAGKEREKNQGFDFDSFIAGTIQLSSQHEPTDVVDKLNDLNSSVSQLELKSLISKSVSQEKQEKGMANLAQLEALYQSSWDSQFVSGGEDCFFINQFCEVRKDEQVEKENTYTSYLDKFFSRKEDTEMLETEPVEDGKLGERGHEEGFLNNSGEFLFNKQLESIGIPQFHSPVGSPLKSIQATLTPSAMKSSPQIPHQTYSSILKHLN</sequence>
<dbReference type="EC" id="2.7.11.24"/>
<dbReference type="EMBL" id="X80692">
    <property type="protein sequence ID" value="CAA56709.1"/>
    <property type="molecule type" value="mRNA"/>
</dbReference>
<dbReference type="EMBL" id="L77964">
    <property type="protein sequence ID" value="AAA98769.1"/>
    <property type="molecule type" value="mRNA"/>
</dbReference>
<dbReference type="EMBL" id="AF420474">
    <property type="protein sequence ID" value="AAL17605.1"/>
    <property type="molecule type" value="mRNA"/>
</dbReference>
<dbReference type="EMBL" id="AK313633">
    <property type="protein sequence ID" value="BAG36392.1"/>
    <property type="molecule type" value="mRNA"/>
</dbReference>
<dbReference type="EMBL" id="CR749401">
    <property type="protein sequence ID" value="CAH18246.1"/>
    <property type="molecule type" value="mRNA"/>
</dbReference>
<dbReference type="EMBL" id="AB451301">
    <property type="protein sequence ID" value="BAG70115.1"/>
    <property type="molecule type" value="mRNA"/>
</dbReference>
<dbReference type="EMBL" id="BC035492">
    <property type="protein sequence ID" value="AAH35492.1"/>
    <property type="molecule type" value="mRNA"/>
</dbReference>
<dbReference type="CCDS" id="CCDS10147.1"/>
<dbReference type="PIR" id="A56352">
    <property type="entry name" value="A56352"/>
</dbReference>
<dbReference type="RefSeq" id="NP_002739.1">
    <property type="nucleotide sequence ID" value="NM_002748.4"/>
</dbReference>
<dbReference type="RefSeq" id="XP_005254594.1">
    <property type="nucleotide sequence ID" value="XM_005254537.4"/>
</dbReference>
<dbReference type="RefSeq" id="XP_005254595.1">
    <property type="nucleotide sequence ID" value="XM_005254538.3"/>
</dbReference>
<dbReference type="RefSeq" id="XP_005254596.1">
    <property type="nucleotide sequence ID" value="XM_005254539.3"/>
</dbReference>
<dbReference type="RefSeq" id="XP_011520084.1">
    <property type="nucleotide sequence ID" value="XM_011521782.2"/>
</dbReference>
<dbReference type="RefSeq" id="XP_047288803.1">
    <property type="nucleotide sequence ID" value="XM_047432847.1"/>
</dbReference>
<dbReference type="RefSeq" id="XP_047288804.1">
    <property type="nucleotide sequence ID" value="XM_047432848.1"/>
</dbReference>
<dbReference type="RefSeq" id="XP_047288805.1">
    <property type="nucleotide sequence ID" value="XM_047432849.1"/>
</dbReference>
<dbReference type="RefSeq" id="XP_047288806.1">
    <property type="nucleotide sequence ID" value="XM_047432850.1"/>
</dbReference>
<dbReference type="RefSeq" id="XP_047288807.1">
    <property type="nucleotide sequence ID" value="XM_047432851.1"/>
</dbReference>
<dbReference type="RefSeq" id="XP_047288808.1">
    <property type="nucleotide sequence ID" value="XM_047432852.1"/>
</dbReference>
<dbReference type="RefSeq" id="XP_047288809.1">
    <property type="nucleotide sequence ID" value="XM_047432853.1"/>
</dbReference>
<dbReference type="RefSeq" id="XP_047288810.1">
    <property type="nucleotide sequence ID" value="XM_047432854.1"/>
</dbReference>
<dbReference type="RefSeq" id="XP_054234407.1">
    <property type="nucleotide sequence ID" value="XM_054378432.1"/>
</dbReference>
<dbReference type="RefSeq" id="XP_054234408.1">
    <property type="nucleotide sequence ID" value="XM_054378433.1"/>
</dbReference>
<dbReference type="RefSeq" id="XP_054234409.1">
    <property type="nucleotide sequence ID" value="XM_054378434.1"/>
</dbReference>
<dbReference type="RefSeq" id="XP_054234410.1">
    <property type="nucleotide sequence ID" value="XM_054378435.1"/>
</dbReference>
<dbReference type="RefSeq" id="XP_054234411.1">
    <property type="nucleotide sequence ID" value="XM_054378436.1"/>
</dbReference>
<dbReference type="RefSeq" id="XP_054234412.1">
    <property type="nucleotide sequence ID" value="XM_054378437.1"/>
</dbReference>
<dbReference type="RefSeq" id="XP_054234413.1">
    <property type="nucleotide sequence ID" value="XM_054378438.1"/>
</dbReference>
<dbReference type="RefSeq" id="XP_054234414.1">
    <property type="nucleotide sequence ID" value="XM_054378439.1"/>
</dbReference>
<dbReference type="RefSeq" id="XP_054234415.1">
    <property type="nucleotide sequence ID" value="XM_054378440.1"/>
</dbReference>
<dbReference type="RefSeq" id="XP_054234416.1">
    <property type="nucleotide sequence ID" value="XM_054378441.1"/>
</dbReference>
<dbReference type="RefSeq" id="XP_054234417.1">
    <property type="nucleotide sequence ID" value="XM_054378442.1"/>
</dbReference>
<dbReference type="PDB" id="6YKY">
    <property type="method" value="X-ray"/>
    <property type="resolution" value="2.52 A"/>
    <property type="chains" value="A/B/C/D=9-327"/>
</dbReference>
<dbReference type="PDB" id="6YLC">
    <property type="method" value="X-ray"/>
    <property type="resolution" value="2.43 A"/>
    <property type="chains" value="A/B/C/D=9-327"/>
</dbReference>
<dbReference type="PDB" id="6YLL">
    <property type="method" value="X-ray"/>
    <property type="resolution" value="2.89 A"/>
    <property type="chains" value="A/B=9-327"/>
</dbReference>
<dbReference type="PDB" id="7AQB">
    <property type="method" value="X-ray"/>
    <property type="resolution" value="2.25 A"/>
    <property type="chains" value="A/B=9-327"/>
</dbReference>
<dbReference type="PDBsum" id="6YKY"/>
<dbReference type="PDBsum" id="6YLC"/>
<dbReference type="PDBsum" id="6YLL"/>
<dbReference type="PDBsum" id="7AQB"/>
<dbReference type="SMR" id="Q16659"/>
<dbReference type="BioGRID" id="111583">
    <property type="interactions" value="473"/>
</dbReference>
<dbReference type="CORUM" id="Q16659"/>
<dbReference type="FunCoup" id="Q16659">
    <property type="interactions" value="4353"/>
</dbReference>
<dbReference type="IntAct" id="Q16659">
    <property type="interactions" value="409"/>
</dbReference>
<dbReference type="MINT" id="Q16659"/>
<dbReference type="STRING" id="9606.ENSP00000261845"/>
<dbReference type="BindingDB" id="Q16659"/>
<dbReference type="ChEMBL" id="CHEMBL5121"/>
<dbReference type="DrugBank" id="DB00945">
    <property type="generic name" value="Acetylsalicylic acid"/>
</dbReference>
<dbReference type="DrugBank" id="DB02587">
    <property type="generic name" value="Colforsin"/>
</dbReference>
<dbReference type="DrugBank" id="DB01017">
    <property type="generic name" value="Minocycline"/>
</dbReference>
<dbReference type="DrugCentral" id="Q16659"/>
<dbReference type="MoonDB" id="Q16659">
    <property type="type" value="Predicted"/>
</dbReference>
<dbReference type="iPTMnet" id="Q16659"/>
<dbReference type="PhosphoSitePlus" id="Q16659"/>
<dbReference type="BioMuta" id="MAPK6"/>
<dbReference type="DMDM" id="2499596"/>
<dbReference type="CPTAC" id="CPTAC-885"/>
<dbReference type="CPTAC" id="CPTAC-886"/>
<dbReference type="jPOST" id="Q16659"/>
<dbReference type="MassIVE" id="Q16659"/>
<dbReference type="PaxDb" id="9606-ENSP00000261845"/>
<dbReference type="PeptideAtlas" id="Q16659"/>
<dbReference type="ProteomicsDB" id="61018"/>
<dbReference type="Pumba" id="Q16659"/>
<dbReference type="Antibodypedia" id="3920">
    <property type="antibodies" value="570 antibodies from 38 providers"/>
</dbReference>
<dbReference type="DNASU" id="5597"/>
<dbReference type="Ensembl" id="ENST00000261845.7">
    <property type="protein sequence ID" value="ENSP00000261845.5"/>
    <property type="gene ID" value="ENSG00000069956.14"/>
</dbReference>
<dbReference type="Ensembl" id="ENST00000680066.1">
    <property type="protein sequence ID" value="ENSP00000505862.1"/>
    <property type="gene ID" value="ENSG00000069956.14"/>
</dbReference>
<dbReference type="Ensembl" id="ENST00000680652.1">
    <property type="protein sequence ID" value="ENSP00000506184.1"/>
    <property type="gene ID" value="ENSG00000069956.14"/>
</dbReference>
<dbReference type="Ensembl" id="ENST00000680777.1">
    <property type="protein sequence ID" value="ENSP00000505601.1"/>
    <property type="gene ID" value="ENSG00000069956.14"/>
</dbReference>
<dbReference type="Ensembl" id="ENST00000681888.1">
    <property type="protein sequence ID" value="ENSP00000506036.1"/>
    <property type="gene ID" value="ENSG00000069956.14"/>
</dbReference>
<dbReference type="Ensembl" id="ENST00000691380.1">
    <property type="protein sequence ID" value="ENSP00000509662.1"/>
    <property type="gene ID" value="ENSG00000069956.14"/>
</dbReference>
<dbReference type="GeneID" id="5597"/>
<dbReference type="KEGG" id="hsa:5597"/>
<dbReference type="MANE-Select" id="ENST00000261845.7">
    <property type="protein sequence ID" value="ENSP00000261845.5"/>
    <property type="RefSeq nucleotide sequence ID" value="NM_002748.4"/>
    <property type="RefSeq protein sequence ID" value="NP_002739.1"/>
</dbReference>
<dbReference type="UCSC" id="uc002abp.4">
    <property type="organism name" value="human"/>
</dbReference>
<dbReference type="AGR" id="HGNC:6879"/>
<dbReference type="CTD" id="5597"/>
<dbReference type="DisGeNET" id="5597"/>
<dbReference type="GeneCards" id="MAPK6"/>
<dbReference type="HGNC" id="HGNC:6879">
    <property type="gene designation" value="MAPK6"/>
</dbReference>
<dbReference type="HPA" id="ENSG00000069956">
    <property type="expression patterns" value="Low tissue specificity"/>
</dbReference>
<dbReference type="MIM" id="602904">
    <property type="type" value="gene"/>
</dbReference>
<dbReference type="neXtProt" id="NX_Q16659"/>
<dbReference type="OpenTargets" id="ENSG00000069956"/>
<dbReference type="PharmGKB" id="PA30624"/>
<dbReference type="VEuPathDB" id="HostDB:ENSG00000069956"/>
<dbReference type="eggNOG" id="KOG0660">
    <property type="taxonomic scope" value="Eukaryota"/>
</dbReference>
<dbReference type="GeneTree" id="ENSGT00940000154351"/>
<dbReference type="HOGENOM" id="CLU_000288_181_15_1"/>
<dbReference type="InParanoid" id="Q16659"/>
<dbReference type="OMA" id="EADWQLH"/>
<dbReference type="OrthoDB" id="8806754at2759"/>
<dbReference type="PAN-GO" id="Q16659">
    <property type="GO annotations" value="4 GO annotations based on evolutionary models"/>
</dbReference>
<dbReference type="PhylomeDB" id="Q16659"/>
<dbReference type="TreeFam" id="TF105098"/>
<dbReference type="BRENDA" id="2.7.11.24">
    <property type="organism ID" value="2681"/>
</dbReference>
<dbReference type="PathwayCommons" id="Q16659"/>
<dbReference type="Reactome" id="R-HSA-5687128">
    <property type="pathway name" value="MAPK6/MAPK4 signaling"/>
</dbReference>
<dbReference type="SignaLink" id="Q16659"/>
<dbReference type="SIGNOR" id="Q16659"/>
<dbReference type="BioGRID-ORCS" id="5597">
    <property type="hits" value="27 hits in 1152 CRISPR screens"/>
</dbReference>
<dbReference type="ChiTaRS" id="MAPK6">
    <property type="organism name" value="human"/>
</dbReference>
<dbReference type="GeneWiki" id="MAPK6"/>
<dbReference type="GenomeRNAi" id="5597"/>
<dbReference type="Pharos" id="Q16659">
    <property type="development level" value="Tchem"/>
</dbReference>
<dbReference type="PRO" id="PR:Q16659"/>
<dbReference type="Proteomes" id="UP000005640">
    <property type="component" value="Chromosome 15"/>
</dbReference>
<dbReference type="RNAct" id="Q16659">
    <property type="molecule type" value="protein"/>
</dbReference>
<dbReference type="Bgee" id="ENSG00000069956">
    <property type="expression patterns" value="Expressed in cartilage tissue and 215 other cell types or tissues"/>
</dbReference>
<dbReference type="GO" id="GO:0005737">
    <property type="term" value="C:cytoplasm"/>
    <property type="evidence" value="ECO:0000250"/>
    <property type="project" value="UniProtKB"/>
</dbReference>
<dbReference type="GO" id="GO:0005829">
    <property type="term" value="C:cytosol"/>
    <property type="evidence" value="ECO:0000314"/>
    <property type="project" value="HPA"/>
</dbReference>
<dbReference type="GO" id="GO:0005654">
    <property type="term" value="C:nucleoplasm"/>
    <property type="evidence" value="ECO:0000304"/>
    <property type="project" value="Reactome"/>
</dbReference>
<dbReference type="GO" id="GO:0005634">
    <property type="term" value="C:nucleus"/>
    <property type="evidence" value="ECO:0000250"/>
    <property type="project" value="UniProtKB"/>
</dbReference>
<dbReference type="GO" id="GO:0032991">
    <property type="term" value="C:protein-containing complex"/>
    <property type="evidence" value="ECO:0007669"/>
    <property type="project" value="Ensembl"/>
</dbReference>
<dbReference type="GO" id="GO:0032156">
    <property type="term" value="C:septin cytoskeleton"/>
    <property type="evidence" value="ECO:0007669"/>
    <property type="project" value="Ensembl"/>
</dbReference>
<dbReference type="GO" id="GO:0005524">
    <property type="term" value="F:ATP binding"/>
    <property type="evidence" value="ECO:0007669"/>
    <property type="project" value="UniProtKB-KW"/>
</dbReference>
<dbReference type="GO" id="GO:0004707">
    <property type="term" value="F:MAP kinase activity"/>
    <property type="evidence" value="ECO:0000250"/>
    <property type="project" value="UniProtKB"/>
</dbReference>
<dbReference type="GO" id="GO:0046982">
    <property type="term" value="F:protein heterodimerization activity"/>
    <property type="evidence" value="ECO:0007669"/>
    <property type="project" value="Ensembl"/>
</dbReference>
<dbReference type="GO" id="GO:0019901">
    <property type="term" value="F:protein kinase binding"/>
    <property type="evidence" value="ECO:0007669"/>
    <property type="project" value="Ensembl"/>
</dbReference>
<dbReference type="GO" id="GO:0106310">
    <property type="term" value="F:protein serine kinase activity"/>
    <property type="evidence" value="ECO:0007669"/>
    <property type="project" value="RHEA"/>
</dbReference>
<dbReference type="GO" id="GO:0004674">
    <property type="term" value="F:protein serine/threonine kinase activity"/>
    <property type="evidence" value="ECO:0000318"/>
    <property type="project" value="GO_Central"/>
</dbReference>
<dbReference type="GO" id="GO:0035556">
    <property type="term" value="P:intracellular signal transduction"/>
    <property type="evidence" value="ECO:0000318"/>
    <property type="project" value="GO_Central"/>
</dbReference>
<dbReference type="GO" id="GO:0060999">
    <property type="term" value="P:positive regulation of dendritic spine development"/>
    <property type="evidence" value="ECO:0007669"/>
    <property type="project" value="Ensembl"/>
</dbReference>
<dbReference type="GO" id="GO:0006468">
    <property type="term" value="P:protein phosphorylation"/>
    <property type="evidence" value="ECO:0000250"/>
    <property type="project" value="UniProtKB"/>
</dbReference>
<dbReference type="GO" id="GO:0007165">
    <property type="term" value="P:signal transduction"/>
    <property type="evidence" value="ECO:0000304"/>
    <property type="project" value="ProtInc"/>
</dbReference>
<dbReference type="CDD" id="cd07854">
    <property type="entry name" value="STKc_MAPK4_6"/>
    <property type="match status" value="1"/>
</dbReference>
<dbReference type="FunFam" id="3.30.200.20:FF:000223">
    <property type="entry name" value="Mitogen-activated protein kinase 6"/>
    <property type="match status" value="1"/>
</dbReference>
<dbReference type="FunFam" id="1.10.510.10:FF:000136">
    <property type="entry name" value="mitogen-activated protein kinase 6"/>
    <property type="match status" value="1"/>
</dbReference>
<dbReference type="Gene3D" id="3.30.200.20">
    <property type="entry name" value="Phosphorylase Kinase, domain 1"/>
    <property type="match status" value="1"/>
</dbReference>
<dbReference type="Gene3D" id="1.10.510.10">
    <property type="entry name" value="Transferase(Phosphotransferase) domain 1"/>
    <property type="match status" value="1"/>
</dbReference>
<dbReference type="InterPro" id="IPR011009">
    <property type="entry name" value="Kinase-like_dom_sf"/>
</dbReference>
<dbReference type="InterPro" id="IPR050117">
    <property type="entry name" value="MAP_kinase"/>
</dbReference>
<dbReference type="InterPro" id="IPR008350">
    <property type="entry name" value="MAPK_ERK3/4"/>
</dbReference>
<dbReference type="InterPro" id="IPR000719">
    <property type="entry name" value="Prot_kinase_dom"/>
</dbReference>
<dbReference type="InterPro" id="IPR017441">
    <property type="entry name" value="Protein_kinase_ATP_BS"/>
</dbReference>
<dbReference type="InterPro" id="IPR008271">
    <property type="entry name" value="Ser/Thr_kinase_AS"/>
</dbReference>
<dbReference type="PANTHER" id="PTHR24055">
    <property type="entry name" value="MITOGEN-ACTIVATED PROTEIN KINASE"/>
    <property type="match status" value="1"/>
</dbReference>
<dbReference type="Pfam" id="PF00069">
    <property type="entry name" value="Pkinase"/>
    <property type="match status" value="1"/>
</dbReference>
<dbReference type="PRINTS" id="PR01771">
    <property type="entry name" value="ERK3ERK4MAPK"/>
</dbReference>
<dbReference type="SMART" id="SM00220">
    <property type="entry name" value="S_TKc"/>
    <property type="match status" value="1"/>
</dbReference>
<dbReference type="SUPFAM" id="SSF56112">
    <property type="entry name" value="Protein kinase-like (PK-like)"/>
    <property type="match status" value="1"/>
</dbReference>
<dbReference type="PROSITE" id="PS00107">
    <property type="entry name" value="PROTEIN_KINASE_ATP"/>
    <property type="match status" value="1"/>
</dbReference>
<dbReference type="PROSITE" id="PS50011">
    <property type="entry name" value="PROTEIN_KINASE_DOM"/>
    <property type="match status" value="1"/>
</dbReference>
<dbReference type="PROSITE" id="PS00108">
    <property type="entry name" value="PROTEIN_KINASE_ST"/>
    <property type="match status" value="1"/>
</dbReference>
<name>MK06_HUMAN</name>
<organism>
    <name type="scientific">Homo sapiens</name>
    <name type="common">Human</name>
    <dbReference type="NCBI Taxonomy" id="9606"/>
    <lineage>
        <taxon>Eukaryota</taxon>
        <taxon>Metazoa</taxon>
        <taxon>Chordata</taxon>
        <taxon>Craniata</taxon>
        <taxon>Vertebrata</taxon>
        <taxon>Euteleostomi</taxon>
        <taxon>Mammalia</taxon>
        <taxon>Eutheria</taxon>
        <taxon>Euarchontoglires</taxon>
        <taxon>Primates</taxon>
        <taxon>Haplorrhini</taxon>
        <taxon>Catarrhini</taxon>
        <taxon>Hominidae</taxon>
        <taxon>Homo</taxon>
    </lineage>
</organism>
<feature type="chain" id="PRO_0000186257" description="Mitogen-activated protein kinase 6">
    <location>
        <begin position="1"/>
        <end position="721"/>
    </location>
</feature>
<feature type="domain" description="Protein kinase" evidence="2">
    <location>
        <begin position="20"/>
        <end position="316"/>
    </location>
</feature>
<feature type="region of interest" description="Disordered" evidence="4">
    <location>
        <begin position="701"/>
        <end position="721"/>
    </location>
</feature>
<feature type="short sequence motif" description="SEG motif">
    <location>
        <begin position="189"/>
        <end position="191"/>
    </location>
</feature>
<feature type="short sequence motif" description="FRIEDE motif">
    <location>
        <begin position="332"/>
        <end position="337"/>
    </location>
</feature>
<feature type="compositionally biased region" description="Polar residues" evidence="4">
    <location>
        <begin position="701"/>
        <end position="715"/>
    </location>
</feature>
<feature type="active site" description="Proton acceptor" evidence="2 3">
    <location>
        <position position="152"/>
    </location>
</feature>
<feature type="binding site" evidence="2">
    <location>
        <begin position="26"/>
        <end position="34"/>
    </location>
    <ligand>
        <name>ATP</name>
        <dbReference type="ChEBI" id="CHEBI:30616"/>
    </ligand>
</feature>
<feature type="binding site" evidence="2">
    <location>
        <position position="49"/>
    </location>
    <ligand>
        <name>ATP</name>
        <dbReference type="ChEBI" id="CHEBI:30616"/>
    </ligand>
</feature>
<feature type="modified residue" description="Phosphoserine; by PAK1, PAK2 and PAK3" evidence="8 11 12 13">
    <location>
        <position position="189"/>
    </location>
</feature>
<feature type="modified residue" description="Phosphoserine" evidence="13">
    <location>
        <position position="386"/>
    </location>
</feature>
<feature type="modified residue" description="Phosphoserine" evidence="13">
    <location>
        <position position="452"/>
    </location>
</feature>
<feature type="modified residue" description="Phosphoserine" evidence="13">
    <location>
        <position position="556"/>
    </location>
</feature>
<feature type="modified residue" description="Phosphoserine" evidence="13">
    <location>
        <position position="558"/>
    </location>
</feature>
<feature type="modified residue" description="Phosphoserine" evidence="13">
    <location>
        <position position="665"/>
    </location>
</feature>
<feature type="modified residue" description="Phosphoserine" evidence="13">
    <location>
        <position position="684"/>
    </location>
</feature>
<feature type="cross-link" description="Peptide (Met-Gly) (interchain with G-Cter in ubiquitin)" evidence="5">
    <location>
        <position position="1"/>
    </location>
</feature>
<feature type="sequence variant" id="VAR_042256" description="In dbSNP:rs35697691." evidence="6 7">
    <original>L</original>
    <variation>V</variation>
    <location>
        <position position="290"/>
    </location>
</feature>
<feature type="sequence conflict" description="In Ref. 4; BAG36392." evidence="10" ref="4">
    <original>K</original>
    <variation>R</variation>
    <location>
        <position position="229"/>
    </location>
</feature>
<feature type="sequence conflict" description="In Ref. 4; BAG70115." evidence="10" ref="4">
    <original>F</original>
    <variation>L</variation>
    <location>
        <position position="527"/>
    </location>
</feature>
<feature type="strand" evidence="17">
    <location>
        <begin position="14"/>
        <end position="16"/>
    </location>
</feature>
<feature type="turn" evidence="17">
    <location>
        <begin position="17"/>
        <end position="19"/>
    </location>
</feature>
<feature type="strand" evidence="17">
    <location>
        <begin position="20"/>
        <end position="25"/>
    </location>
</feature>
<feature type="strand" evidence="17">
    <location>
        <begin position="34"/>
        <end position="39"/>
    </location>
</feature>
<feature type="turn" evidence="17">
    <location>
        <begin position="40"/>
        <end position="42"/>
    </location>
</feature>
<feature type="strand" evidence="17">
    <location>
        <begin position="45"/>
        <end position="52"/>
    </location>
</feature>
<feature type="helix" evidence="17">
    <location>
        <begin position="56"/>
        <end position="70"/>
    </location>
</feature>
<feature type="strand" evidence="17">
    <location>
        <begin position="80"/>
        <end position="84"/>
    </location>
</feature>
<feature type="strand" evidence="15">
    <location>
        <begin position="86"/>
        <end position="88"/>
    </location>
</feature>
<feature type="strand" evidence="17">
    <location>
        <begin position="102"/>
        <end position="109"/>
    </location>
</feature>
<feature type="strand" evidence="17">
    <location>
        <begin position="112"/>
        <end position="114"/>
    </location>
</feature>
<feature type="helix" evidence="17">
    <location>
        <begin position="115"/>
        <end position="120"/>
    </location>
</feature>
<feature type="helix" evidence="17">
    <location>
        <begin position="126"/>
        <end position="145"/>
    </location>
</feature>
<feature type="strand" evidence="15">
    <location>
        <begin position="148"/>
        <end position="150"/>
    </location>
</feature>
<feature type="helix" evidence="17">
    <location>
        <begin position="155"/>
        <end position="157"/>
    </location>
</feature>
<feature type="strand" evidence="17">
    <location>
        <begin position="158"/>
        <end position="161"/>
    </location>
</feature>
<feature type="turn" evidence="17">
    <location>
        <begin position="162"/>
        <end position="165"/>
    </location>
</feature>
<feature type="strand" evidence="17">
    <location>
        <begin position="166"/>
        <end position="169"/>
    </location>
</feature>
<feature type="strand" evidence="15">
    <location>
        <begin position="174"/>
        <end position="176"/>
    </location>
</feature>
<feature type="helix" evidence="15">
    <location>
        <begin position="180"/>
        <end position="182"/>
    </location>
</feature>
<feature type="turn" evidence="14">
    <location>
        <begin position="183"/>
        <end position="186"/>
    </location>
</feature>
<feature type="helix" evidence="17">
    <location>
        <begin position="190"/>
        <end position="192"/>
    </location>
</feature>
<feature type="helix" evidence="17">
    <location>
        <begin position="200"/>
        <end position="204"/>
    </location>
</feature>
<feature type="helix" evidence="17">
    <location>
        <begin position="211"/>
        <end position="227"/>
    </location>
</feature>
<feature type="helix" evidence="17">
    <location>
        <begin position="237"/>
        <end position="247"/>
    </location>
</feature>
<feature type="helix" evidence="17">
    <location>
        <begin position="253"/>
        <end position="260"/>
    </location>
</feature>
<feature type="helix" evidence="17">
    <location>
        <begin position="265"/>
        <end position="270"/>
    </location>
</feature>
<feature type="strand" evidence="16">
    <location>
        <begin position="271"/>
        <end position="273"/>
    </location>
</feature>
<feature type="helix" evidence="17">
    <location>
        <begin position="278"/>
        <end position="281"/>
    </location>
</feature>
<feature type="strand" evidence="15">
    <location>
        <begin position="282"/>
        <end position="285"/>
    </location>
</feature>
<feature type="helix" evidence="17">
    <location>
        <begin position="287"/>
        <end position="294"/>
    </location>
</feature>
<feature type="helix" evidence="17">
    <location>
        <begin position="301"/>
        <end position="303"/>
    </location>
</feature>
<feature type="helix" evidence="17">
    <location>
        <begin position="307"/>
        <end position="312"/>
    </location>
</feature>
<feature type="helix" evidence="17">
    <location>
        <begin position="314"/>
        <end position="317"/>
    </location>
</feature>
<comment type="function">
    <text evidence="1">Atypical MAPK protein. Phosphorylates microtubule-associated protein 2 (MAP2) and MAPKAPK5. The precise role of the complex formed with MAPKAPK5 is still unclear, but the complex follows a complex set of phosphorylation events: upon interaction with atypical MAPKAPK5, ERK3/MAPK6 is phosphorylated at Ser-189 and then mediates phosphorylation and activation of MAPKAPK5, which in turn phosphorylates ERK3/MAPK6. May promote entry in the cell cycle (By similarity).</text>
</comment>
<comment type="catalytic activity">
    <reaction>
        <text>L-seryl-[protein] + ATP = O-phospho-L-seryl-[protein] + ADP + H(+)</text>
        <dbReference type="Rhea" id="RHEA:17989"/>
        <dbReference type="Rhea" id="RHEA-COMP:9863"/>
        <dbReference type="Rhea" id="RHEA-COMP:11604"/>
        <dbReference type="ChEBI" id="CHEBI:15378"/>
        <dbReference type="ChEBI" id="CHEBI:29999"/>
        <dbReference type="ChEBI" id="CHEBI:30616"/>
        <dbReference type="ChEBI" id="CHEBI:83421"/>
        <dbReference type="ChEBI" id="CHEBI:456216"/>
        <dbReference type="EC" id="2.7.11.24"/>
    </reaction>
</comment>
<comment type="catalytic activity">
    <reaction>
        <text>L-threonyl-[protein] + ATP = O-phospho-L-threonyl-[protein] + ADP + H(+)</text>
        <dbReference type="Rhea" id="RHEA:46608"/>
        <dbReference type="Rhea" id="RHEA-COMP:11060"/>
        <dbReference type="Rhea" id="RHEA-COMP:11605"/>
        <dbReference type="ChEBI" id="CHEBI:15378"/>
        <dbReference type="ChEBI" id="CHEBI:30013"/>
        <dbReference type="ChEBI" id="CHEBI:30616"/>
        <dbReference type="ChEBI" id="CHEBI:61977"/>
        <dbReference type="ChEBI" id="CHEBI:456216"/>
        <dbReference type="EC" id="2.7.11.24"/>
    </reaction>
</comment>
<comment type="cofactor">
    <cofactor evidence="1">
        <name>Mg(2+)</name>
        <dbReference type="ChEBI" id="CHEBI:18420"/>
    </cofactor>
</comment>
<comment type="activity regulation">
    <text>Activated by phosphorylation at Ser-189.</text>
</comment>
<comment type="subunit">
    <text evidence="1 9">Heterodimer with ERK4/MAPK4. Interacts with (via FRIEDE motif) MAPKAPK5 (By similarity). Interacts with UBE3A; this interaction may be indirect and mediated by HERC2, possibly via HERC2 interaction with NEURL4.</text>
</comment>
<comment type="interaction">
    <interactant intactId="EBI-1384105">
        <id>Q16659</id>
    </interactant>
    <interactant intactId="EBI-12111292">
        <id>Q9GZV1</id>
        <label>ANKRD2</label>
    </interactant>
    <organismsDiffer>false</organismsDiffer>
    <experiments>7</experiments>
</comment>
<comment type="interaction">
    <interactant intactId="EBI-1384105">
        <id>Q16659</id>
    </interactant>
    <interactant intactId="EBI-701692">
        <id>P02647</id>
        <label>APOA1</label>
    </interactant>
    <organismsDiffer>false</organismsDiffer>
    <experiments>3</experiments>
</comment>
<comment type="interaction">
    <interactant intactId="EBI-1384105">
        <id>Q16659</id>
    </interactant>
    <interactant intactId="EBI-1175354">
        <id>Q9H6Z9</id>
        <label>EGLN3</label>
    </interactant>
    <organismsDiffer>false</organismsDiffer>
    <experiments>6</experiments>
</comment>
<comment type="interaction">
    <interactant intactId="EBI-1384105">
        <id>Q16659</id>
    </interactant>
    <interactant intactId="EBI-1201460">
        <id>Q8IW41</id>
        <label>MAPKAPK5</label>
    </interactant>
    <organismsDiffer>false</organismsDiffer>
    <experiments>12</experiments>
</comment>
<comment type="interaction">
    <interactant intactId="EBI-1384105">
        <id>Q16659</id>
    </interactant>
    <interactant intactId="EBI-11958803">
        <id>Q8IW41-2</id>
        <label>MAPKAPK5</label>
    </interactant>
    <organismsDiffer>false</organismsDiffer>
    <experiments>6</experiments>
</comment>
<comment type="interaction">
    <interactant intactId="EBI-1384105">
        <id>Q16659</id>
    </interactant>
    <interactant intactId="EBI-779991">
        <id>P12504</id>
        <label>vif</label>
    </interactant>
    <organismsDiffer>true</organismsDiffer>
    <experiments>2</experiments>
</comment>
<comment type="subcellular location">
    <subcellularLocation>
        <location evidence="1">Cytoplasm</location>
    </subcellularLocation>
    <subcellularLocation>
        <location evidence="1">Nucleus</location>
    </subcellularLocation>
    <text evidence="1">Translocates to the cytoplasm following interaction with MAPKAPK5.</text>
</comment>
<comment type="tissue specificity">
    <text>Highest expression in the skeletal muscle, followed by the brain. Also found in heart, placenta, lung, liver, pancreas, kidney and skin fibroblasts.</text>
</comment>
<comment type="domain">
    <text evidence="1">In contrast to classical MAPKs, the TXY motif within the activation loop is replaced by the SEG motif, whose phosphorylation activates the MAP kinases.</text>
</comment>
<comment type="PTM">
    <text evidence="8">Phosphorylated at Ser-189 by PAK1, PAK2 and PAK3 resulting in catalytic activation. Phosphorylated by MAPKAPK5 at other sites.</text>
</comment>
<comment type="PTM">
    <text evidence="5">Ubiquitination at Met-1 leads to degradation by the proteasome pathway.</text>
</comment>
<comment type="similarity">
    <text evidence="10">Belongs to the protein kinase superfamily. CMGC Ser/Thr protein kinase family. MAP kinase subfamily.</text>
</comment>
<comment type="online information" name="Atlas of Genetics and Cytogenetics in Oncology and Haematology">
    <link uri="https://atlasgeneticsoncology.org/gene/43349/MAPK6"/>
</comment>
<evidence type="ECO:0000250" key="1"/>
<evidence type="ECO:0000255" key="2">
    <source>
        <dbReference type="PROSITE-ProRule" id="PRU00159"/>
    </source>
</evidence>
<evidence type="ECO:0000255" key="3">
    <source>
        <dbReference type="PROSITE-ProRule" id="PRU10027"/>
    </source>
</evidence>
<evidence type="ECO:0000256" key="4">
    <source>
        <dbReference type="SAM" id="MobiDB-lite"/>
    </source>
</evidence>
<evidence type="ECO:0000269" key="5">
    <source>
    </source>
</evidence>
<evidence type="ECO:0000269" key="6">
    <source>
    </source>
</evidence>
<evidence type="ECO:0000269" key="7">
    <source>
    </source>
</evidence>
<evidence type="ECO:0000269" key="8">
    <source>
    </source>
</evidence>
<evidence type="ECO:0000269" key="9">
    <source>
    </source>
</evidence>
<evidence type="ECO:0000305" key="10"/>
<evidence type="ECO:0007744" key="11">
    <source>
    </source>
</evidence>
<evidence type="ECO:0007744" key="12">
    <source>
    </source>
</evidence>
<evidence type="ECO:0007744" key="13">
    <source>
    </source>
</evidence>
<evidence type="ECO:0007829" key="14">
    <source>
        <dbReference type="PDB" id="6YKY"/>
    </source>
</evidence>
<evidence type="ECO:0007829" key="15">
    <source>
        <dbReference type="PDB" id="6YLC"/>
    </source>
</evidence>
<evidence type="ECO:0007829" key="16">
    <source>
        <dbReference type="PDB" id="6YLL"/>
    </source>
</evidence>
<evidence type="ECO:0007829" key="17">
    <source>
        <dbReference type="PDB" id="7AQB"/>
    </source>
</evidence>